<feature type="chain" id="PRO_1000185880" description="Pyridoxal 5'-phosphate synthase subunit PdxT">
    <location>
        <begin position="1"/>
        <end position="190"/>
    </location>
</feature>
<feature type="active site" description="Nucleophile" evidence="1">
    <location>
        <position position="78"/>
    </location>
</feature>
<feature type="active site" description="Charge relay system" evidence="1">
    <location>
        <position position="174"/>
    </location>
</feature>
<feature type="active site" description="Charge relay system" evidence="1">
    <location>
        <position position="176"/>
    </location>
</feature>
<feature type="binding site" evidence="1">
    <location>
        <begin position="46"/>
        <end position="48"/>
    </location>
    <ligand>
        <name>L-glutamine</name>
        <dbReference type="ChEBI" id="CHEBI:58359"/>
    </ligand>
</feature>
<feature type="binding site" evidence="1">
    <location>
        <position position="108"/>
    </location>
    <ligand>
        <name>L-glutamine</name>
        <dbReference type="ChEBI" id="CHEBI:58359"/>
    </ligand>
</feature>
<feature type="binding site" evidence="1">
    <location>
        <begin position="137"/>
        <end position="138"/>
    </location>
    <ligand>
        <name>L-glutamine</name>
        <dbReference type="ChEBI" id="CHEBI:58359"/>
    </ligand>
</feature>
<reference key="1">
    <citation type="submission" date="2008-12" db="EMBL/GenBank/DDBJ databases">
        <title>Complete sequence of Chloroflexus aggregans DSM 9485.</title>
        <authorList>
            <consortium name="US DOE Joint Genome Institute"/>
            <person name="Lucas S."/>
            <person name="Copeland A."/>
            <person name="Lapidus A."/>
            <person name="Glavina del Rio T."/>
            <person name="Dalin E."/>
            <person name="Tice H."/>
            <person name="Pitluck S."/>
            <person name="Foster B."/>
            <person name="Larimer F."/>
            <person name="Land M."/>
            <person name="Hauser L."/>
            <person name="Kyrpides N."/>
            <person name="Mikhailova N."/>
            <person name="Bryant D.A."/>
            <person name="Richardson P."/>
        </authorList>
    </citation>
    <scope>NUCLEOTIDE SEQUENCE [LARGE SCALE GENOMIC DNA]</scope>
    <source>
        <strain>MD-66 / DSM 9485</strain>
    </source>
</reference>
<proteinExistence type="inferred from homology"/>
<sequence>MTVGVLALQGDFREHCAVLRRIGVEPIEVRLPHQLAQVDHLIIPGGESTTIGRLLAIYQMLEPIRTRGGCDLAIWGTCAGAILLANEVMDQKQGGQPTLGLMNLTIRRNAYGSQLDSFEAPITMPIIGEEPLPGVFIRAPQIMALGQGCEAVGWLEDGSVVAARQGRLLATTFHPELTHDDRVHRLFLEL</sequence>
<organism>
    <name type="scientific">Chloroflexus aggregans (strain MD-66 / DSM 9485)</name>
    <dbReference type="NCBI Taxonomy" id="326427"/>
    <lineage>
        <taxon>Bacteria</taxon>
        <taxon>Bacillati</taxon>
        <taxon>Chloroflexota</taxon>
        <taxon>Chloroflexia</taxon>
        <taxon>Chloroflexales</taxon>
        <taxon>Chloroflexineae</taxon>
        <taxon>Chloroflexaceae</taxon>
        <taxon>Chloroflexus</taxon>
    </lineage>
</organism>
<protein>
    <recommendedName>
        <fullName evidence="1">Pyridoxal 5'-phosphate synthase subunit PdxT</fullName>
        <ecNumber evidence="1">4.3.3.6</ecNumber>
    </recommendedName>
    <alternativeName>
        <fullName evidence="1">Pdx2</fullName>
    </alternativeName>
    <alternativeName>
        <fullName evidence="1">Pyridoxal 5'-phosphate synthase glutaminase subunit</fullName>
        <ecNumber evidence="1">3.5.1.2</ecNumber>
    </alternativeName>
</protein>
<comment type="function">
    <text evidence="1">Catalyzes the hydrolysis of glutamine to glutamate and ammonia as part of the biosynthesis of pyridoxal 5'-phosphate. The resulting ammonia molecule is channeled to the active site of PdxS.</text>
</comment>
<comment type="catalytic activity">
    <reaction evidence="1">
        <text>aldehydo-D-ribose 5-phosphate + D-glyceraldehyde 3-phosphate + L-glutamine = pyridoxal 5'-phosphate + L-glutamate + phosphate + 3 H2O + H(+)</text>
        <dbReference type="Rhea" id="RHEA:31507"/>
        <dbReference type="ChEBI" id="CHEBI:15377"/>
        <dbReference type="ChEBI" id="CHEBI:15378"/>
        <dbReference type="ChEBI" id="CHEBI:29985"/>
        <dbReference type="ChEBI" id="CHEBI:43474"/>
        <dbReference type="ChEBI" id="CHEBI:58273"/>
        <dbReference type="ChEBI" id="CHEBI:58359"/>
        <dbReference type="ChEBI" id="CHEBI:59776"/>
        <dbReference type="ChEBI" id="CHEBI:597326"/>
        <dbReference type="EC" id="4.3.3.6"/>
    </reaction>
</comment>
<comment type="catalytic activity">
    <reaction evidence="1">
        <text>L-glutamine + H2O = L-glutamate + NH4(+)</text>
        <dbReference type="Rhea" id="RHEA:15889"/>
        <dbReference type="ChEBI" id="CHEBI:15377"/>
        <dbReference type="ChEBI" id="CHEBI:28938"/>
        <dbReference type="ChEBI" id="CHEBI:29985"/>
        <dbReference type="ChEBI" id="CHEBI:58359"/>
        <dbReference type="EC" id="3.5.1.2"/>
    </reaction>
</comment>
<comment type="pathway">
    <text evidence="1">Cofactor biosynthesis; pyridoxal 5'-phosphate biosynthesis.</text>
</comment>
<comment type="subunit">
    <text evidence="1">In the presence of PdxS, forms a dodecamer of heterodimers. Only shows activity in the heterodimer.</text>
</comment>
<comment type="similarity">
    <text evidence="1">Belongs to the glutaminase PdxT/SNO family.</text>
</comment>
<gene>
    <name evidence="1" type="primary">pdxT</name>
    <name type="ordered locus">Cagg_2937</name>
</gene>
<name>PDXT_CHLAD</name>
<dbReference type="EC" id="4.3.3.6" evidence="1"/>
<dbReference type="EC" id="3.5.1.2" evidence="1"/>
<dbReference type="EMBL" id="CP001337">
    <property type="protein sequence ID" value="ACL25797.1"/>
    <property type="molecule type" value="Genomic_DNA"/>
</dbReference>
<dbReference type="RefSeq" id="WP_015941653.1">
    <property type="nucleotide sequence ID" value="NC_011831.1"/>
</dbReference>
<dbReference type="SMR" id="B8G664"/>
<dbReference type="STRING" id="326427.Cagg_2937"/>
<dbReference type="MEROPS" id="C26.A32"/>
<dbReference type="KEGG" id="cag:Cagg_2937"/>
<dbReference type="eggNOG" id="COG0311">
    <property type="taxonomic scope" value="Bacteria"/>
</dbReference>
<dbReference type="HOGENOM" id="CLU_069674_2_0_0"/>
<dbReference type="OrthoDB" id="9810320at2"/>
<dbReference type="UniPathway" id="UPA00245"/>
<dbReference type="Proteomes" id="UP000002508">
    <property type="component" value="Chromosome"/>
</dbReference>
<dbReference type="GO" id="GO:0005829">
    <property type="term" value="C:cytosol"/>
    <property type="evidence" value="ECO:0007669"/>
    <property type="project" value="TreeGrafter"/>
</dbReference>
<dbReference type="GO" id="GO:1903600">
    <property type="term" value="C:glutaminase complex"/>
    <property type="evidence" value="ECO:0007669"/>
    <property type="project" value="TreeGrafter"/>
</dbReference>
<dbReference type="GO" id="GO:0004359">
    <property type="term" value="F:glutaminase activity"/>
    <property type="evidence" value="ECO:0007669"/>
    <property type="project" value="UniProtKB-UniRule"/>
</dbReference>
<dbReference type="GO" id="GO:0036381">
    <property type="term" value="F:pyridoxal 5'-phosphate synthase (glutamine hydrolysing) activity"/>
    <property type="evidence" value="ECO:0007669"/>
    <property type="project" value="UniProtKB-UniRule"/>
</dbReference>
<dbReference type="GO" id="GO:0006543">
    <property type="term" value="P:glutamine catabolic process"/>
    <property type="evidence" value="ECO:0007669"/>
    <property type="project" value="UniProtKB-UniRule"/>
</dbReference>
<dbReference type="GO" id="GO:0042823">
    <property type="term" value="P:pyridoxal phosphate biosynthetic process"/>
    <property type="evidence" value="ECO:0007669"/>
    <property type="project" value="UniProtKB-UniRule"/>
</dbReference>
<dbReference type="GO" id="GO:0008614">
    <property type="term" value="P:pyridoxine metabolic process"/>
    <property type="evidence" value="ECO:0007669"/>
    <property type="project" value="TreeGrafter"/>
</dbReference>
<dbReference type="CDD" id="cd01749">
    <property type="entry name" value="GATase1_PB"/>
    <property type="match status" value="1"/>
</dbReference>
<dbReference type="FunFam" id="3.40.50.880:FF:000041">
    <property type="entry name" value="Glutamine amidotransferase subunit pdxT, putative"/>
    <property type="match status" value="1"/>
</dbReference>
<dbReference type="Gene3D" id="3.40.50.880">
    <property type="match status" value="1"/>
</dbReference>
<dbReference type="HAMAP" id="MF_01615">
    <property type="entry name" value="PdxT"/>
    <property type="match status" value="1"/>
</dbReference>
<dbReference type="InterPro" id="IPR029062">
    <property type="entry name" value="Class_I_gatase-like"/>
</dbReference>
<dbReference type="InterPro" id="IPR002161">
    <property type="entry name" value="PdxT/SNO"/>
</dbReference>
<dbReference type="NCBIfam" id="TIGR03800">
    <property type="entry name" value="PLP_synth_Pdx2"/>
    <property type="match status" value="1"/>
</dbReference>
<dbReference type="PANTHER" id="PTHR31559">
    <property type="entry name" value="PYRIDOXAL 5'-PHOSPHATE SYNTHASE SUBUNIT SNO"/>
    <property type="match status" value="1"/>
</dbReference>
<dbReference type="PANTHER" id="PTHR31559:SF0">
    <property type="entry name" value="PYRIDOXAL 5'-PHOSPHATE SYNTHASE SUBUNIT SNO1-RELATED"/>
    <property type="match status" value="1"/>
</dbReference>
<dbReference type="Pfam" id="PF01174">
    <property type="entry name" value="SNO"/>
    <property type="match status" value="1"/>
</dbReference>
<dbReference type="PIRSF" id="PIRSF005639">
    <property type="entry name" value="Glut_amidoT_SNO"/>
    <property type="match status" value="1"/>
</dbReference>
<dbReference type="SUPFAM" id="SSF52317">
    <property type="entry name" value="Class I glutamine amidotransferase-like"/>
    <property type="match status" value="1"/>
</dbReference>
<dbReference type="PROSITE" id="PS51130">
    <property type="entry name" value="PDXT_SNO_2"/>
    <property type="match status" value="1"/>
</dbReference>
<evidence type="ECO:0000255" key="1">
    <source>
        <dbReference type="HAMAP-Rule" id="MF_01615"/>
    </source>
</evidence>
<accession>B8G664</accession>
<keyword id="KW-0315">Glutamine amidotransferase</keyword>
<keyword id="KW-0378">Hydrolase</keyword>
<keyword id="KW-0456">Lyase</keyword>
<keyword id="KW-0663">Pyridoxal phosphate</keyword>